<proteinExistence type="inferred from homology"/>
<feature type="chain" id="PRO_0000164617" description="D-aminoacyl-tRNA deacylase">
    <location>
        <begin position="1"/>
        <end position="144"/>
    </location>
</feature>
<feature type="short sequence motif" description="Gly-cisPro motif, important for rejection of L-amino acids" evidence="1">
    <location>
        <begin position="136"/>
        <end position="137"/>
    </location>
</feature>
<comment type="function">
    <text evidence="1">An aminoacyl-tRNA editing enzyme that deacylates mischarged D-aminoacyl-tRNAs. Also deacylates mischarged glycyl-tRNA(Ala), protecting cells against glycine mischarging by AlaRS. Acts via tRNA-based rather than protein-based catalysis; rejects L-amino acids rather than detecting D-amino acids in the active site. By recycling D-aminoacyl-tRNA to D-amino acids and free tRNA molecules, this enzyme counteracts the toxicity associated with the formation of D-aminoacyl-tRNA entities in vivo and helps enforce protein L-homochirality.</text>
</comment>
<comment type="catalytic activity">
    <reaction evidence="1">
        <text>glycyl-tRNA(Ala) + H2O = tRNA(Ala) + glycine + H(+)</text>
        <dbReference type="Rhea" id="RHEA:53744"/>
        <dbReference type="Rhea" id="RHEA-COMP:9657"/>
        <dbReference type="Rhea" id="RHEA-COMP:13640"/>
        <dbReference type="ChEBI" id="CHEBI:15377"/>
        <dbReference type="ChEBI" id="CHEBI:15378"/>
        <dbReference type="ChEBI" id="CHEBI:57305"/>
        <dbReference type="ChEBI" id="CHEBI:78442"/>
        <dbReference type="ChEBI" id="CHEBI:78522"/>
        <dbReference type="EC" id="3.1.1.96"/>
    </reaction>
</comment>
<comment type="catalytic activity">
    <reaction evidence="1">
        <text>a D-aminoacyl-tRNA + H2O = a tRNA + a D-alpha-amino acid + H(+)</text>
        <dbReference type="Rhea" id="RHEA:13953"/>
        <dbReference type="Rhea" id="RHEA-COMP:10123"/>
        <dbReference type="Rhea" id="RHEA-COMP:10124"/>
        <dbReference type="ChEBI" id="CHEBI:15377"/>
        <dbReference type="ChEBI" id="CHEBI:15378"/>
        <dbReference type="ChEBI" id="CHEBI:59871"/>
        <dbReference type="ChEBI" id="CHEBI:78442"/>
        <dbReference type="ChEBI" id="CHEBI:79333"/>
        <dbReference type="EC" id="3.1.1.96"/>
    </reaction>
</comment>
<comment type="subunit">
    <text evidence="1">Homodimer.</text>
</comment>
<comment type="subcellular location">
    <subcellularLocation>
        <location evidence="1">Cytoplasm</location>
    </subcellularLocation>
</comment>
<comment type="domain">
    <text evidence="1">A Gly-cisPro motif from one monomer fits into the active site of the other monomer to allow specific chiral rejection of L-amino acids.</text>
</comment>
<comment type="similarity">
    <text evidence="1">Belongs to the DTD family.</text>
</comment>
<accession>Q87TE4</accession>
<keyword id="KW-0963">Cytoplasm</keyword>
<keyword id="KW-0378">Hydrolase</keyword>
<keyword id="KW-0694">RNA-binding</keyword>
<keyword id="KW-0820">tRNA-binding</keyword>
<gene>
    <name evidence="1" type="primary">dtd</name>
    <name type="ordered locus">VP0126</name>
</gene>
<name>DTD_VIBPA</name>
<evidence type="ECO:0000255" key="1">
    <source>
        <dbReference type="HAMAP-Rule" id="MF_00518"/>
    </source>
</evidence>
<protein>
    <recommendedName>
        <fullName evidence="1">D-aminoacyl-tRNA deacylase</fullName>
        <shortName evidence="1">DTD</shortName>
        <ecNumber evidence="1">3.1.1.96</ecNumber>
    </recommendedName>
    <alternativeName>
        <fullName evidence="1">Gly-tRNA(Ala) deacylase</fullName>
    </alternativeName>
</protein>
<reference key="1">
    <citation type="journal article" date="2003" name="Lancet">
        <title>Genome sequence of Vibrio parahaemolyticus: a pathogenic mechanism distinct from that of V. cholerae.</title>
        <authorList>
            <person name="Makino K."/>
            <person name="Oshima K."/>
            <person name="Kurokawa K."/>
            <person name="Yokoyama K."/>
            <person name="Uda T."/>
            <person name="Tagomori K."/>
            <person name="Iijima Y."/>
            <person name="Najima M."/>
            <person name="Nakano M."/>
            <person name="Yamashita A."/>
            <person name="Kubota Y."/>
            <person name="Kimura S."/>
            <person name="Yasunaga T."/>
            <person name="Honda T."/>
            <person name="Shinagawa H."/>
            <person name="Hattori M."/>
            <person name="Iida T."/>
        </authorList>
    </citation>
    <scope>NUCLEOTIDE SEQUENCE [LARGE SCALE GENOMIC DNA]</scope>
    <source>
        <strain>RIMD 2210633</strain>
    </source>
</reference>
<dbReference type="EC" id="3.1.1.96" evidence="1"/>
<dbReference type="EMBL" id="BA000031">
    <property type="protein sequence ID" value="BAC58389.1"/>
    <property type="molecule type" value="Genomic_DNA"/>
</dbReference>
<dbReference type="RefSeq" id="NP_796505.1">
    <property type="nucleotide sequence ID" value="NC_004603.1"/>
</dbReference>
<dbReference type="RefSeq" id="WP_005478645.1">
    <property type="nucleotide sequence ID" value="NC_004603.1"/>
</dbReference>
<dbReference type="SMR" id="Q87TE4"/>
<dbReference type="GeneID" id="1187593"/>
<dbReference type="KEGG" id="vpa:VP0126"/>
<dbReference type="PATRIC" id="fig|223926.6.peg.118"/>
<dbReference type="eggNOG" id="COG1490">
    <property type="taxonomic scope" value="Bacteria"/>
</dbReference>
<dbReference type="HOGENOM" id="CLU_076901_1_1_6"/>
<dbReference type="Proteomes" id="UP000002493">
    <property type="component" value="Chromosome 1"/>
</dbReference>
<dbReference type="GO" id="GO:0005737">
    <property type="term" value="C:cytoplasm"/>
    <property type="evidence" value="ECO:0007669"/>
    <property type="project" value="UniProtKB-SubCell"/>
</dbReference>
<dbReference type="GO" id="GO:0051500">
    <property type="term" value="F:D-tyrosyl-tRNA(Tyr) deacylase activity"/>
    <property type="evidence" value="ECO:0007669"/>
    <property type="project" value="TreeGrafter"/>
</dbReference>
<dbReference type="GO" id="GO:0106026">
    <property type="term" value="F:Gly-tRNA(Ala) deacylase activity"/>
    <property type="evidence" value="ECO:0007669"/>
    <property type="project" value="UniProtKB-UniRule"/>
</dbReference>
<dbReference type="GO" id="GO:0043908">
    <property type="term" value="F:Ser(Gly)-tRNA(Ala) hydrolase activity"/>
    <property type="evidence" value="ECO:0007669"/>
    <property type="project" value="UniProtKB-UniRule"/>
</dbReference>
<dbReference type="GO" id="GO:0000049">
    <property type="term" value="F:tRNA binding"/>
    <property type="evidence" value="ECO:0007669"/>
    <property type="project" value="UniProtKB-UniRule"/>
</dbReference>
<dbReference type="GO" id="GO:0019478">
    <property type="term" value="P:D-amino acid catabolic process"/>
    <property type="evidence" value="ECO:0007669"/>
    <property type="project" value="UniProtKB-UniRule"/>
</dbReference>
<dbReference type="CDD" id="cd00563">
    <property type="entry name" value="Dtyr_deacylase"/>
    <property type="match status" value="1"/>
</dbReference>
<dbReference type="FunFam" id="3.50.80.10:FF:000001">
    <property type="entry name" value="D-aminoacyl-tRNA deacylase"/>
    <property type="match status" value="1"/>
</dbReference>
<dbReference type="Gene3D" id="3.50.80.10">
    <property type="entry name" value="D-tyrosyl-tRNA(Tyr) deacylase"/>
    <property type="match status" value="1"/>
</dbReference>
<dbReference type="HAMAP" id="MF_00518">
    <property type="entry name" value="Deacylase_Dtd"/>
    <property type="match status" value="1"/>
</dbReference>
<dbReference type="InterPro" id="IPR003732">
    <property type="entry name" value="Daa-tRNA_deacyls_DTD"/>
</dbReference>
<dbReference type="InterPro" id="IPR023509">
    <property type="entry name" value="DTD-like_sf"/>
</dbReference>
<dbReference type="NCBIfam" id="TIGR00256">
    <property type="entry name" value="D-aminoacyl-tRNA deacylase"/>
    <property type="match status" value="1"/>
</dbReference>
<dbReference type="PANTHER" id="PTHR10472:SF5">
    <property type="entry name" value="D-AMINOACYL-TRNA DEACYLASE 1"/>
    <property type="match status" value="1"/>
</dbReference>
<dbReference type="PANTHER" id="PTHR10472">
    <property type="entry name" value="D-TYROSYL-TRNA TYR DEACYLASE"/>
    <property type="match status" value="1"/>
</dbReference>
<dbReference type="Pfam" id="PF02580">
    <property type="entry name" value="Tyr_Deacylase"/>
    <property type="match status" value="1"/>
</dbReference>
<dbReference type="SUPFAM" id="SSF69500">
    <property type="entry name" value="DTD-like"/>
    <property type="match status" value="1"/>
</dbReference>
<sequence length="144" mass="16035">MIALIQRVSEAAVRVDGEVVGEIDTGLLVLLGVEKDDDEAKAKRLMERVTTYRVFEDDEGKMNLNVKQVNGKVLVVSQFTLPADTKKGTRAGFSRGAHPADAERLYDYFSDLCEQELPTERGRFAADMKVSLINDGPVTFWLQV</sequence>
<organism>
    <name type="scientific">Vibrio parahaemolyticus serotype O3:K6 (strain RIMD 2210633)</name>
    <dbReference type="NCBI Taxonomy" id="223926"/>
    <lineage>
        <taxon>Bacteria</taxon>
        <taxon>Pseudomonadati</taxon>
        <taxon>Pseudomonadota</taxon>
        <taxon>Gammaproteobacteria</taxon>
        <taxon>Vibrionales</taxon>
        <taxon>Vibrionaceae</taxon>
        <taxon>Vibrio</taxon>
    </lineage>
</organism>